<reference key="1">
    <citation type="journal article" date="1999" name="Mol. Cell. Biol.">
        <title>Identification of CHIP, a novel tetratricopeptide repeat-containing protein that interacts with heat shock proteins and negatively regulates chaperone functions.</title>
        <authorList>
            <person name="Ballinger C.A."/>
            <person name="Connell P."/>
            <person name="Wu Y."/>
            <person name="Hu Z."/>
            <person name="Thompson L.J."/>
            <person name="Yin L.-Y."/>
            <person name="Patterson C."/>
        </authorList>
    </citation>
    <scope>NUCLEOTIDE SEQUENCE [MRNA]</scope>
</reference>
<reference key="2">
    <citation type="journal article" date="2005" name="Science">
        <title>The transcriptional landscape of the mammalian genome.</title>
        <authorList>
            <person name="Carninci P."/>
            <person name="Kasukawa T."/>
            <person name="Katayama S."/>
            <person name="Gough J."/>
            <person name="Frith M.C."/>
            <person name="Maeda N."/>
            <person name="Oyama R."/>
            <person name="Ravasi T."/>
            <person name="Lenhard B."/>
            <person name="Wells C."/>
            <person name="Kodzius R."/>
            <person name="Shimokawa K."/>
            <person name="Bajic V.B."/>
            <person name="Brenner S.E."/>
            <person name="Batalov S."/>
            <person name="Forrest A.R."/>
            <person name="Zavolan M."/>
            <person name="Davis M.J."/>
            <person name="Wilming L.G."/>
            <person name="Aidinis V."/>
            <person name="Allen J.E."/>
            <person name="Ambesi-Impiombato A."/>
            <person name="Apweiler R."/>
            <person name="Aturaliya R.N."/>
            <person name="Bailey T.L."/>
            <person name="Bansal M."/>
            <person name="Baxter L."/>
            <person name="Beisel K.W."/>
            <person name="Bersano T."/>
            <person name="Bono H."/>
            <person name="Chalk A.M."/>
            <person name="Chiu K.P."/>
            <person name="Choudhary V."/>
            <person name="Christoffels A."/>
            <person name="Clutterbuck D.R."/>
            <person name="Crowe M.L."/>
            <person name="Dalla E."/>
            <person name="Dalrymple B.P."/>
            <person name="de Bono B."/>
            <person name="Della Gatta G."/>
            <person name="di Bernardo D."/>
            <person name="Down T."/>
            <person name="Engstrom P."/>
            <person name="Fagiolini M."/>
            <person name="Faulkner G."/>
            <person name="Fletcher C.F."/>
            <person name="Fukushima T."/>
            <person name="Furuno M."/>
            <person name="Futaki S."/>
            <person name="Gariboldi M."/>
            <person name="Georgii-Hemming P."/>
            <person name="Gingeras T.R."/>
            <person name="Gojobori T."/>
            <person name="Green R.E."/>
            <person name="Gustincich S."/>
            <person name="Harbers M."/>
            <person name="Hayashi Y."/>
            <person name="Hensch T.K."/>
            <person name="Hirokawa N."/>
            <person name="Hill D."/>
            <person name="Huminiecki L."/>
            <person name="Iacono M."/>
            <person name="Ikeo K."/>
            <person name="Iwama A."/>
            <person name="Ishikawa T."/>
            <person name="Jakt M."/>
            <person name="Kanapin A."/>
            <person name="Katoh M."/>
            <person name="Kawasawa Y."/>
            <person name="Kelso J."/>
            <person name="Kitamura H."/>
            <person name="Kitano H."/>
            <person name="Kollias G."/>
            <person name="Krishnan S.P."/>
            <person name="Kruger A."/>
            <person name="Kummerfeld S.K."/>
            <person name="Kurochkin I.V."/>
            <person name="Lareau L.F."/>
            <person name="Lazarevic D."/>
            <person name="Lipovich L."/>
            <person name="Liu J."/>
            <person name="Liuni S."/>
            <person name="McWilliam S."/>
            <person name="Madan Babu M."/>
            <person name="Madera M."/>
            <person name="Marchionni L."/>
            <person name="Matsuda H."/>
            <person name="Matsuzawa S."/>
            <person name="Miki H."/>
            <person name="Mignone F."/>
            <person name="Miyake S."/>
            <person name="Morris K."/>
            <person name="Mottagui-Tabar S."/>
            <person name="Mulder N."/>
            <person name="Nakano N."/>
            <person name="Nakauchi H."/>
            <person name="Ng P."/>
            <person name="Nilsson R."/>
            <person name="Nishiguchi S."/>
            <person name="Nishikawa S."/>
            <person name="Nori F."/>
            <person name="Ohara O."/>
            <person name="Okazaki Y."/>
            <person name="Orlando V."/>
            <person name="Pang K.C."/>
            <person name="Pavan W.J."/>
            <person name="Pavesi G."/>
            <person name="Pesole G."/>
            <person name="Petrovsky N."/>
            <person name="Piazza S."/>
            <person name="Reed J."/>
            <person name="Reid J.F."/>
            <person name="Ring B.Z."/>
            <person name="Ringwald M."/>
            <person name="Rost B."/>
            <person name="Ruan Y."/>
            <person name="Salzberg S.L."/>
            <person name="Sandelin A."/>
            <person name="Schneider C."/>
            <person name="Schoenbach C."/>
            <person name="Sekiguchi K."/>
            <person name="Semple C.A."/>
            <person name="Seno S."/>
            <person name="Sessa L."/>
            <person name="Sheng Y."/>
            <person name="Shibata Y."/>
            <person name="Shimada H."/>
            <person name="Shimada K."/>
            <person name="Silva D."/>
            <person name="Sinclair B."/>
            <person name="Sperling S."/>
            <person name="Stupka E."/>
            <person name="Sugiura K."/>
            <person name="Sultana R."/>
            <person name="Takenaka Y."/>
            <person name="Taki K."/>
            <person name="Tammoja K."/>
            <person name="Tan S.L."/>
            <person name="Tang S."/>
            <person name="Taylor M.S."/>
            <person name="Tegner J."/>
            <person name="Teichmann S.A."/>
            <person name="Ueda H.R."/>
            <person name="van Nimwegen E."/>
            <person name="Verardo R."/>
            <person name="Wei C.L."/>
            <person name="Yagi K."/>
            <person name="Yamanishi H."/>
            <person name="Zabarovsky E."/>
            <person name="Zhu S."/>
            <person name="Zimmer A."/>
            <person name="Hide W."/>
            <person name="Bult C."/>
            <person name="Grimmond S.M."/>
            <person name="Teasdale R.D."/>
            <person name="Liu E.T."/>
            <person name="Brusic V."/>
            <person name="Quackenbush J."/>
            <person name="Wahlestedt C."/>
            <person name="Mattick J.S."/>
            <person name="Hume D.A."/>
            <person name="Kai C."/>
            <person name="Sasaki D."/>
            <person name="Tomaru Y."/>
            <person name="Fukuda S."/>
            <person name="Kanamori-Katayama M."/>
            <person name="Suzuki M."/>
            <person name="Aoki J."/>
            <person name="Arakawa T."/>
            <person name="Iida J."/>
            <person name="Imamura K."/>
            <person name="Itoh M."/>
            <person name="Kato T."/>
            <person name="Kawaji H."/>
            <person name="Kawagashira N."/>
            <person name="Kawashima T."/>
            <person name="Kojima M."/>
            <person name="Kondo S."/>
            <person name="Konno H."/>
            <person name="Nakano K."/>
            <person name="Ninomiya N."/>
            <person name="Nishio T."/>
            <person name="Okada M."/>
            <person name="Plessy C."/>
            <person name="Shibata K."/>
            <person name="Shiraki T."/>
            <person name="Suzuki S."/>
            <person name="Tagami M."/>
            <person name="Waki K."/>
            <person name="Watahiki A."/>
            <person name="Okamura-Oho Y."/>
            <person name="Suzuki H."/>
            <person name="Kawai J."/>
            <person name="Hayashizaki Y."/>
        </authorList>
    </citation>
    <scope>NUCLEOTIDE SEQUENCE [LARGE SCALE MRNA]</scope>
    <source>
        <strain>C57BL/6J</strain>
        <tissue>Corpora quadrigemina</tissue>
        <tissue>Embryo</tissue>
        <tissue>Kidney</tissue>
    </source>
</reference>
<reference key="3">
    <citation type="journal article" date="2004" name="Genome Res.">
        <title>The status, quality, and expansion of the NIH full-length cDNA project: the Mammalian Gene Collection (MGC).</title>
        <authorList>
            <consortium name="The MGC Project Team"/>
        </authorList>
    </citation>
    <scope>NUCLEOTIDE SEQUENCE [LARGE SCALE MRNA]</scope>
    <source>
        <strain>FVB/N</strain>
        <tissue>Mammary tumor</tissue>
        <tissue>Salivary gland</tissue>
    </source>
</reference>
<reference key="4">
    <citation type="journal article" date="2001" name="J. Biol. Chem.">
        <title>U box proteins as a new family of ubiquitin-protein ligases.</title>
        <authorList>
            <person name="Hatakeyama S."/>
            <person name="Yada M."/>
            <person name="Matsumoto M."/>
            <person name="Ishida N."/>
            <person name="Nakayama K.I."/>
        </authorList>
    </citation>
    <scope>FUNCTION</scope>
    <scope>CATALYTIC ACTIVITY</scope>
    <scope>PATHWAY</scope>
    <scope>SUBCELLULAR LOCATION</scope>
    <scope>DOMAIN</scope>
    <scope>MUTAGENESIS OF HIS-261 AND PRO-270</scope>
</reference>
<reference key="5">
    <citation type="journal article" date="2006" name="Mol. Cell. Proteomics">
        <title>Comprehensive identification of phosphorylation sites in postsynaptic density preparations.</title>
        <authorList>
            <person name="Trinidad J.C."/>
            <person name="Specht C.G."/>
            <person name="Thalhammer A."/>
            <person name="Schoepfer R."/>
            <person name="Burlingame A.L."/>
        </authorList>
    </citation>
    <scope>PHOSPHORYLATION [LARGE SCALE ANALYSIS] AT SER-20</scope>
    <scope>IDENTIFICATION BY MASS SPECTROMETRY [LARGE SCALE ANALYSIS]</scope>
    <source>
        <tissue>Brain</tissue>
    </source>
</reference>
<reference key="6">
    <citation type="journal article" date="2009" name="Immunity">
        <title>The phagosomal proteome in interferon-gamma-activated macrophages.</title>
        <authorList>
            <person name="Trost M."/>
            <person name="English L."/>
            <person name="Lemieux S."/>
            <person name="Courcelles M."/>
            <person name="Desjardins M."/>
            <person name="Thibault P."/>
        </authorList>
    </citation>
    <scope>PHOSPHORYLATION [LARGE SCALE ANALYSIS] AT SER-20</scope>
    <scope>IDENTIFICATION BY MASS SPECTROMETRY [LARGE SCALE ANALYSIS]</scope>
</reference>
<reference key="7">
    <citation type="journal article" date="2009" name="Mol. Cell. Biol.">
        <title>CHIP represses myocardin-induced smooth muscle cell differentiation via ubiquitin-mediated proteasomal degradation.</title>
        <authorList>
            <person name="Xie P."/>
            <person name="Fan Y."/>
            <person name="Zhang H."/>
            <person name="Zhang Y."/>
            <person name="She M."/>
            <person name="Gu D."/>
            <person name="Patterson C."/>
            <person name="Li H."/>
        </authorList>
    </citation>
    <scope>INTERACTION WITH MYOCD</scope>
</reference>
<reference key="8">
    <citation type="journal article" date="2009" name="Mol. Cell. Proteomics">
        <title>Large scale localization of protein phosphorylation by use of electron capture dissociation mass spectrometry.</title>
        <authorList>
            <person name="Sweet S.M."/>
            <person name="Bailey C.M."/>
            <person name="Cunningham D.L."/>
            <person name="Heath J.K."/>
            <person name="Cooper H.J."/>
        </authorList>
    </citation>
    <scope>PHOSPHORYLATION [LARGE SCALE ANALYSIS] AT SER-24 AND SER-26</scope>
    <scope>IDENTIFICATION BY MASS SPECTROMETRY [LARGE SCALE ANALYSIS]</scope>
    <source>
        <tissue>Embryonic fibroblast</tissue>
    </source>
</reference>
<reference key="9">
    <citation type="journal article" date="2010" name="Cell">
        <title>A tissue-specific atlas of mouse protein phosphorylation and expression.</title>
        <authorList>
            <person name="Huttlin E.L."/>
            <person name="Jedrychowski M.P."/>
            <person name="Elias J.E."/>
            <person name="Goswami T."/>
            <person name="Rad R."/>
            <person name="Beausoleil S.A."/>
            <person name="Villen J."/>
            <person name="Haas W."/>
            <person name="Sowa M.E."/>
            <person name="Gygi S.P."/>
        </authorList>
    </citation>
    <scope>PHOSPHORYLATION [LARGE SCALE ANALYSIS] AT SER-20 AND SER-24</scope>
    <scope>IDENTIFICATION BY MASS SPECTROMETRY [LARGE SCALE ANALYSIS]</scope>
    <source>
        <tissue>Brain</tissue>
        <tissue>Brown adipose tissue</tissue>
        <tissue>Heart</tissue>
        <tissue>Kidney</tissue>
        <tissue>Liver</tissue>
        <tissue>Lung</tissue>
        <tissue>Pancreas</tissue>
        <tissue>Spleen</tissue>
        <tissue>Testis</tissue>
    </source>
</reference>
<reference key="10">
    <citation type="journal article" date="2010" name="Curr. Biol.">
        <title>Chaperone-assisted selective autophagy is essential for muscle maintenance.</title>
        <authorList>
            <person name="Arndt V."/>
            <person name="Dick N."/>
            <person name="Tawo R."/>
            <person name="Dreiseidler M."/>
            <person name="Wenzel D."/>
            <person name="Hesse M."/>
            <person name="Fuerst D.O."/>
            <person name="Saftig P."/>
            <person name="Saint R."/>
            <person name="Fleischmann B.K."/>
            <person name="Hoch M."/>
            <person name="Hoehfeld J."/>
        </authorList>
    </citation>
    <scope>INTERACTION WITH BAG3; HSPA8 AND HSPB8 IN CASA COMPLEX</scope>
</reference>
<reference key="11">
    <citation type="journal article" date="2010" name="FASEB J.">
        <title>Novel role of C terminus of Hsc70-interacting protein (CHIP) ubiquitin ligase on inhibiting cardiac apoptosis and dysfunction via regulating ERK5-mediated degradation of inducible cAMP early repressor.</title>
        <authorList>
            <person name="Woo C.H."/>
            <person name="Le N.T."/>
            <person name="Shishido T."/>
            <person name="Chang E."/>
            <person name="Lee H."/>
            <person name="Heo K.S."/>
            <person name="Mickelsen D.M."/>
            <person name="Lu Y."/>
            <person name="McClain C."/>
            <person name="Spangenberg T."/>
            <person name="Yan C."/>
            <person name="Molina C.A."/>
            <person name="Yang J."/>
            <person name="Patterson C."/>
            <person name="Abe J."/>
        </authorList>
    </citation>
    <scope>INTERACTION WITH MAPK7</scope>
    <scope>DISRUPTION PHENOTYPE</scope>
</reference>
<reference key="12">
    <citation type="journal article" date="2011" name="Mol. Cell">
        <title>Ube2w and ataxin-3 coordinately regulate the ubiquitin ligase CHIP.</title>
        <authorList>
            <person name="Scaglione K.M."/>
            <person name="Zavodszky E."/>
            <person name="Todi S.V."/>
            <person name="Patury S."/>
            <person name="Xu P."/>
            <person name="Rodriguez-Lebron E."/>
            <person name="Fischer S."/>
            <person name="Konen J."/>
            <person name="Djarmati A."/>
            <person name="Peng J."/>
            <person name="Gestwicki J.E."/>
            <person name="Paulson H.L."/>
        </authorList>
    </citation>
    <scope>FUNCTION</scope>
    <scope>CATALYTIC ACTIVITY</scope>
    <scope>PATHWAY</scope>
    <scope>INTERACTION WITH UBE2W AND ATXN3</scope>
    <scope>UBIQUITINATION AT LYS-2</scope>
    <scope>MUTAGENESIS OF LYS-2; LYS-4 AND LYS-7</scope>
</reference>
<reference key="13">
    <citation type="journal article" date="2013" name="Immunity">
        <title>The ubiquitin ligase Stub1 negatively modulates regulatory T cell suppressive activity by promoting degradation of the transcription factor Foxp3.</title>
        <authorList>
            <person name="Chen Z."/>
            <person name="Barbi J."/>
            <person name="Bu S."/>
            <person name="Yang H.Y."/>
            <person name="Li Z."/>
            <person name="Gao Y."/>
            <person name="Jinasena D."/>
            <person name="Fu J."/>
            <person name="Lin F."/>
            <person name="Chen C."/>
            <person name="Zhang J."/>
            <person name="Yu N."/>
            <person name="Li X."/>
            <person name="Shan Z."/>
            <person name="Nie J."/>
            <person name="Gao Z."/>
            <person name="Tian H."/>
            <person name="Li Y."/>
            <person name="Yao Z."/>
            <person name="Zheng Y."/>
            <person name="Park B.V."/>
            <person name="Pan Z."/>
            <person name="Zhang J."/>
            <person name="Dang E."/>
            <person name="Li Z."/>
            <person name="Wang H."/>
            <person name="Luo W."/>
            <person name="Li L."/>
            <person name="Semenza G.L."/>
            <person name="Zheng S.G."/>
            <person name="Loser K."/>
            <person name="Tsun A."/>
            <person name="Greene M.I."/>
            <person name="Pardoll D.M."/>
            <person name="Pan F."/>
            <person name="Li B."/>
        </authorList>
    </citation>
    <scope>FUNCTION</scope>
    <scope>INDUCTION</scope>
</reference>
<reference key="14">
    <citation type="journal article" date="2013" name="Mol. Cell. Biol.">
        <title>The ubiquitin ligase CHIP prevents SirT6 degradation through noncanonical ubiquitination.</title>
        <authorList>
            <person name="Ronnebaum S.M."/>
            <person name="Wu Y."/>
            <person name="McDonough H."/>
            <person name="Patterson C."/>
        </authorList>
    </citation>
    <scope>FUNCTION</scope>
</reference>
<reference key="15">
    <citation type="journal article" date="2015" name="Biochem. Pharmacol.">
        <title>UBXN2A regulates nicotinic receptor degradation by modulating the E3 ligase activity of CHIP.</title>
        <authorList>
            <person name="Teng Y."/>
            <person name="Rezvani K."/>
            <person name="De Biasi M."/>
        </authorList>
    </citation>
    <scope>FUNCTION</scope>
    <scope>TISSUE SPECIFICITY</scope>
    <scope>DISRUPTION PHENOTYPE</scope>
</reference>
<reference key="16">
    <citation type="journal article" date="2018" name="J. Neurosci.">
        <title>Neuronal Preconditioning Requires the Mitophagic Activity of C-terminus of HSC70-Interacting Protein.</title>
        <authorList>
            <person name="Lizama B.N."/>
            <person name="Palubinsky A.M."/>
            <person name="Raveendran V.A."/>
            <person name="Moore A.M."/>
            <person name="Federspiel J.D."/>
            <person name="Codreanu S.G."/>
            <person name="Liebler D.C."/>
            <person name="McLaughlin B."/>
        </authorList>
    </citation>
    <scope>FUNCTION</scope>
    <scope>DISRUPTION PHENOTYPE</scope>
</reference>
<reference key="17">
    <citation type="journal article" date="2022" name="Lab. Invest.">
        <title>PAQR3 depletion accelerates diabetic wound healing by promoting angiogenesis through inhibiting STUB1-mediated PPARgamma degradation.</title>
        <authorList>
            <person name="Qiu J."/>
            <person name="Shu C."/>
            <person name="Li X."/>
            <person name="Zhang W.C."/>
        </authorList>
    </citation>
    <scope>INTERACTION WITH PAQR3</scope>
    <scope>FUNCTION</scope>
</reference>
<reference key="18">
    <citation type="journal article" date="2005" name="Mol. Cell">
        <title>Chaperoned ubiquitylation -- crystal structures of the CHIP U box E3 ubiquitin ligase and a CHIP-Ubc13-Uev1a complex.</title>
        <authorList>
            <person name="Zhang M."/>
            <person name="Windheim M."/>
            <person name="Roe S.M."/>
            <person name="Peggie M."/>
            <person name="Cohen P."/>
            <person name="Prodromou C."/>
            <person name="Pearl L.H."/>
        </authorList>
    </citation>
    <scope>X-RAY CRYSTALLOGRAPHY (2.9 ANGSTROMS) OF 24-304 IN COMPLEX WITH UBE2N AND UBE2V1</scope>
    <scope>X-RAY CRYSTALLOGRAPHY (3.3 ANGSTROMS) OF 227-304 IN COMPLEX WITH HSP90AA1</scope>
    <scope>HOMODIMERIZATION</scope>
</reference>
<dbReference type="EC" id="2.3.2.27" evidence="4 9"/>
<dbReference type="EMBL" id="AF129086">
    <property type="protein sequence ID" value="AAD33401.1"/>
    <property type="molecule type" value="mRNA"/>
</dbReference>
<dbReference type="EMBL" id="AK002752">
    <property type="protein sequence ID" value="BAB22329.1"/>
    <property type="molecule type" value="mRNA"/>
</dbReference>
<dbReference type="EMBL" id="AK004464">
    <property type="protein sequence ID" value="BAB23315.1"/>
    <property type="molecule type" value="mRNA"/>
</dbReference>
<dbReference type="EMBL" id="AK045776">
    <property type="protein sequence ID" value="BAC32489.1"/>
    <property type="molecule type" value="mRNA"/>
</dbReference>
<dbReference type="EMBL" id="AK166630">
    <property type="protein sequence ID" value="BAE38905.1"/>
    <property type="molecule type" value="mRNA"/>
</dbReference>
<dbReference type="EMBL" id="BC027427">
    <property type="protein sequence ID" value="AAH27427.1"/>
    <property type="molecule type" value="mRNA"/>
</dbReference>
<dbReference type="EMBL" id="BC038939">
    <property type="protein sequence ID" value="AAH38939.1"/>
    <property type="molecule type" value="mRNA"/>
</dbReference>
<dbReference type="CCDS" id="CCDS28533.1"/>
<dbReference type="RefSeq" id="NP_062693.1">
    <property type="nucleotide sequence ID" value="NM_019719.4"/>
</dbReference>
<dbReference type="PDB" id="2C2L">
    <property type="method" value="X-ray"/>
    <property type="resolution" value="3.30 A"/>
    <property type="chains" value="A/B/C/D=24-304"/>
</dbReference>
<dbReference type="PDB" id="2C2V">
    <property type="method" value="X-ray"/>
    <property type="resolution" value="2.90 A"/>
    <property type="chains" value="S/T/U/V=227-304"/>
</dbReference>
<dbReference type="PDB" id="3Q47">
    <property type="method" value="X-ray"/>
    <property type="resolution" value="1.70 A"/>
    <property type="chains" value="B=23-155"/>
</dbReference>
<dbReference type="PDB" id="3Q49">
    <property type="method" value="X-ray"/>
    <property type="resolution" value="1.54 A"/>
    <property type="chains" value="B=23-155"/>
</dbReference>
<dbReference type="PDB" id="3Q4A">
    <property type="method" value="X-ray"/>
    <property type="resolution" value="1.54 A"/>
    <property type="chains" value="B=23-155"/>
</dbReference>
<dbReference type="PDBsum" id="2C2L"/>
<dbReference type="PDBsum" id="2C2V"/>
<dbReference type="PDBsum" id="3Q47"/>
<dbReference type="PDBsum" id="3Q49"/>
<dbReference type="PDBsum" id="3Q4A"/>
<dbReference type="BMRB" id="Q9WUD1"/>
<dbReference type="SMR" id="Q9WUD1"/>
<dbReference type="BioGRID" id="207969">
    <property type="interactions" value="79"/>
</dbReference>
<dbReference type="CORUM" id="Q9WUD1"/>
<dbReference type="DIP" id="DIP-29751N"/>
<dbReference type="FunCoup" id="Q9WUD1">
    <property type="interactions" value="3345"/>
</dbReference>
<dbReference type="IntAct" id="Q9WUD1">
    <property type="interactions" value="18"/>
</dbReference>
<dbReference type="MINT" id="Q9WUD1"/>
<dbReference type="STRING" id="10090.ENSMUSP00000040431"/>
<dbReference type="GlyGen" id="Q9WUD1">
    <property type="glycosylation" value="1 site, 1 O-linked glycan (1 site)"/>
</dbReference>
<dbReference type="iPTMnet" id="Q9WUD1"/>
<dbReference type="PhosphoSitePlus" id="Q9WUD1"/>
<dbReference type="SwissPalm" id="Q9WUD1"/>
<dbReference type="jPOST" id="Q9WUD1"/>
<dbReference type="PaxDb" id="10090-ENSMUSP00000040431"/>
<dbReference type="PeptideAtlas" id="Q9WUD1"/>
<dbReference type="ProteomicsDB" id="283905"/>
<dbReference type="Pumba" id="Q9WUD1"/>
<dbReference type="Antibodypedia" id="22808">
    <property type="antibodies" value="477 antibodies from 45 providers"/>
</dbReference>
<dbReference type="DNASU" id="56424"/>
<dbReference type="Ensembl" id="ENSMUST00000044911.10">
    <property type="protein sequence ID" value="ENSMUSP00000040431.9"/>
    <property type="gene ID" value="ENSMUSG00000039615.10"/>
</dbReference>
<dbReference type="GeneID" id="56424"/>
<dbReference type="KEGG" id="mmu:56424"/>
<dbReference type="UCSC" id="uc008bcf.1">
    <property type="organism name" value="mouse"/>
</dbReference>
<dbReference type="AGR" id="MGI:1891731"/>
<dbReference type="CTD" id="10273"/>
<dbReference type="MGI" id="MGI:1891731">
    <property type="gene designation" value="Stub1"/>
</dbReference>
<dbReference type="VEuPathDB" id="HostDB:ENSMUSG00000039615"/>
<dbReference type="eggNOG" id="KOG4642">
    <property type="taxonomic scope" value="Eukaryota"/>
</dbReference>
<dbReference type="GeneTree" id="ENSGT00930000151045"/>
<dbReference type="HOGENOM" id="CLU_056455_1_0_1"/>
<dbReference type="InParanoid" id="Q9WUD1"/>
<dbReference type="OMA" id="WAGVEHD"/>
<dbReference type="OrthoDB" id="629492at2759"/>
<dbReference type="PhylomeDB" id="Q9WUD1"/>
<dbReference type="TreeFam" id="TF313937"/>
<dbReference type="Reactome" id="R-MMU-2173788">
    <property type="pathway name" value="Downregulation of TGF-beta receptor signaling"/>
</dbReference>
<dbReference type="Reactome" id="R-MMU-5357905">
    <property type="pathway name" value="Regulation of TNFR1 signaling"/>
</dbReference>
<dbReference type="Reactome" id="R-MMU-5675482">
    <property type="pathway name" value="Regulation of necroptotic cell death"/>
</dbReference>
<dbReference type="Reactome" id="R-MMU-8863795">
    <property type="pathway name" value="Downregulation of ERBB2 signaling"/>
</dbReference>
<dbReference type="Reactome" id="R-MMU-8939902">
    <property type="pathway name" value="Regulation of RUNX2 expression and activity"/>
</dbReference>
<dbReference type="Reactome" id="R-MMU-8948751">
    <property type="pathway name" value="Regulation of PTEN stability and activity"/>
</dbReference>
<dbReference type="Reactome" id="R-MMU-983168">
    <property type="pathway name" value="Antigen processing: Ubiquitination &amp; Proteasome degradation"/>
</dbReference>
<dbReference type="UniPathway" id="UPA00143"/>
<dbReference type="BioGRID-ORCS" id="56424">
    <property type="hits" value="22 hits in 118 CRISPR screens"/>
</dbReference>
<dbReference type="CD-CODE" id="CE726F99">
    <property type="entry name" value="Postsynaptic density"/>
</dbReference>
<dbReference type="ChiTaRS" id="Stub1">
    <property type="organism name" value="mouse"/>
</dbReference>
<dbReference type="EvolutionaryTrace" id="Q9WUD1"/>
<dbReference type="PRO" id="PR:Q9WUD1"/>
<dbReference type="Proteomes" id="UP000000589">
    <property type="component" value="Chromosome 17"/>
</dbReference>
<dbReference type="RNAct" id="Q9WUD1">
    <property type="molecule type" value="protein"/>
</dbReference>
<dbReference type="Bgee" id="ENSMUSG00000039615">
    <property type="expression patterns" value="Expressed in embryonic facial prominence and 65 other cell types or tissues"/>
</dbReference>
<dbReference type="ExpressionAtlas" id="Q9WUD1">
    <property type="expression patterns" value="baseline and differential"/>
</dbReference>
<dbReference type="GO" id="GO:0005737">
    <property type="term" value="C:cytoplasm"/>
    <property type="evidence" value="ECO:0000314"/>
    <property type="project" value="ARUK-UCL"/>
</dbReference>
<dbReference type="GO" id="GO:0005829">
    <property type="term" value="C:cytosol"/>
    <property type="evidence" value="ECO:0007669"/>
    <property type="project" value="Ensembl"/>
</dbReference>
<dbReference type="GO" id="GO:0005783">
    <property type="term" value="C:endoplasmic reticulum"/>
    <property type="evidence" value="ECO:0007669"/>
    <property type="project" value="Ensembl"/>
</dbReference>
<dbReference type="GO" id="GO:0005739">
    <property type="term" value="C:mitochondrion"/>
    <property type="evidence" value="ECO:0000250"/>
    <property type="project" value="UniProtKB"/>
</dbReference>
<dbReference type="GO" id="GO:0042405">
    <property type="term" value="C:nuclear inclusion body"/>
    <property type="evidence" value="ECO:0007669"/>
    <property type="project" value="Ensembl"/>
</dbReference>
<dbReference type="GO" id="GO:0005654">
    <property type="term" value="C:nucleoplasm"/>
    <property type="evidence" value="ECO:0007669"/>
    <property type="project" value="Ensembl"/>
</dbReference>
<dbReference type="GO" id="GO:0101031">
    <property type="term" value="C:protein folding chaperone complex"/>
    <property type="evidence" value="ECO:0007669"/>
    <property type="project" value="Ensembl"/>
</dbReference>
<dbReference type="GO" id="GO:0031371">
    <property type="term" value="C:ubiquitin conjugating enzyme complex"/>
    <property type="evidence" value="ECO:0000304"/>
    <property type="project" value="HGNC-UCL"/>
</dbReference>
<dbReference type="GO" id="GO:0000151">
    <property type="term" value="C:ubiquitin ligase complex"/>
    <property type="evidence" value="ECO:0000250"/>
    <property type="project" value="UniProtKB"/>
</dbReference>
<dbReference type="GO" id="GO:0030018">
    <property type="term" value="C:Z disc"/>
    <property type="evidence" value="ECO:0000314"/>
    <property type="project" value="MGI"/>
</dbReference>
<dbReference type="GO" id="GO:0001664">
    <property type="term" value="F:G protein-coupled receptor binding"/>
    <property type="evidence" value="ECO:0007669"/>
    <property type="project" value="Ensembl"/>
</dbReference>
<dbReference type="GO" id="GO:0031072">
    <property type="term" value="F:heat shock protein binding"/>
    <property type="evidence" value="ECO:0000304"/>
    <property type="project" value="HGNC-UCL"/>
</dbReference>
<dbReference type="GO" id="GO:0030544">
    <property type="term" value="F:Hsp70 protein binding"/>
    <property type="evidence" value="ECO:0000250"/>
    <property type="project" value="HGNC-UCL"/>
</dbReference>
<dbReference type="GO" id="GO:0051879">
    <property type="term" value="F:Hsp90 protein binding"/>
    <property type="evidence" value="ECO:0000250"/>
    <property type="project" value="BHF-UCL"/>
</dbReference>
<dbReference type="GO" id="GO:0019900">
    <property type="term" value="F:kinase binding"/>
    <property type="evidence" value="ECO:0007669"/>
    <property type="project" value="Ensembl"/>
</dbReference>
<dbReference type="GO" id="GO:0051787">
    <property type="term" value="F:misfolded protein binding"/>
    <property type="evidence" value="ECO:0007669"/>
    <property type="project" value="Ensembl"/>
</dbReference>
<dbReference type="GO" id="GO:0042803">
    <property type="term" value="F:protein homodimerization activity"/>
    <property type="evidence" value="ECO:0000353"/>
    <property type="project" value="HGNC-UCL"/>
</dbReference>
<dbReference type="GO" id="GO:0030674">
    <property type="term" value="F:protein-macromolecule adaptor activity"/>
    <property type="evidence" value="ECO:0000304"/>
    <property type="project" value="HGNC-UCL"/>
</dbReference>
<dbReference type="GO" id="GO:0070412">
    <property type="term" value="F:R-SMAD binding"/>
    <property type="evidence" value="ECO:0007669"/>
    <property type="project" value="Ensembl"/>
</dbReference>
<dbReference type="GO" id="GO:0030911">
    <property type="term" value="F:TPR domain binding"/>
    <property type="evidence" value="ECO:0000250"/>
    <property type="project" value="HGNC-UCL"/>
</dbReference>
<dbReference type="GO" id="GO:0061630">
    <property type="term" value="F:ubiquitin protein ligase activity"/>
    <property type="evidence" value="ECO:0000314"/>
    <property type="project" value="UniProtKB"/>
</dbReference>
<dbReference type="GO" id="GO:0031625">
    <property type="term" value="F:ubiquitin protein ligase binding"/>
    <property type="evidence" value="ECO:0000353"/>
    <property type="project" value="UniProtKB"/>
</dbReference>
<dbReference type="GO" id="GO:0004842">
    <property type="term" value="F:ubiquitin-protein transferase activity"/>
    <property type="evidence" value="ECO:0000250"/>
    <property type="project" value="UniProtKB"/>
</dbReference>
<dbReference type="GO" id="GO:0034450">
    <property type="term" value="F:ubiquitin-ubiquitin ligase activity"/>
    <property type="evidence" value="ECO:0000314"/>
    <property type="project" value="MGI"/>
</dbReference>
<dbReference type="GO" id="GO:0034605">
    <property type="term" value="P:cellular response to heat"/>
    <property type="evidence" value="ECO:0007669"/>
    <property type="project" value="Ensembl"/>
</dbReference>
<dbReference type="GO" id="GO:0071456">
    <property type="term" value="P:cellular response to hypoxia"/>
    <property type="evidence" value="ECO:0007669"/>
    <property type="project" value="Ensembl"/>
</dbReference>
<dbReference type="GO" id="GO:0071218">
    <property type="term" value="P:cellular response to misfolded protein"/>
    <property type="evidence" value="ECO:0000315"/>
    <property type="project" value="UniProtKB"/>
</dbReference>
<dbReference type="GO" id="GO:0061684">
    <property type="term" value="P:chaperone-mediated autophagy"/>
    <property type="evidence" value="ECO:0007669"/>
    <property type="project" value="Ensembl"/>
</dbReference>
<dbReference type="GO" id="GO:0006281">
    <property type="term" value="P:DNA repair"/>
    <property type="evidence" value="ECO:0007669"/>
    <property type="project" value="UniProtKB-KW"/>
</dbReference>
<dbReference type="GO" id="GO:0030968">
    <property type="term" value="P:endoplasmic reticulum unfolded protein response"/>
    <property type="evidence" value="ECO:0000314"/>
    <property type="project" value="ParkinsonsUK-UCL"/>
</dbReference>
<dbReference type="GO" id="GO:0036503">
    <property type="term" value="P:ERAD pathway"/>
    <property type="evidence" value="ECO:0007669"/>
    <property type="project" value="Ensembl"/>
</dbReference>
<dbReference type="GO" id="GO:0000165">
    <property type="term" value="P:MAPK cascade"/>
    <property type="evidence" value="ECO:0000250"/>
    <property type="project" value="UniProtKB"/>
</dbReference>
<dbReference type="GO" id="GO:0010614">
    <property type="term" value="P:negative regulation of cardiac muscle hypertrophy"/>
    <property type="evidence" value="ECO:0007669"/>
    <property type="project" value="Ensembl"/>
</dbReference>
<dbReference type="GO" id="GO:0035359">
    <property type="term" value="P:negative regulation of peroxisome proliferator activated receptor signaling pathway"/>
    <property type="evidence" value="ECO:0000314"/>
    <property type="project" value="UniProtKB"/>
</dbReference>
<dbReference type="GO" id="GO:0032091">
    <property type="term" value="P:negative regulation of protein binding"/>
    <property type="evidence" value="ECO:0000314"/>
    <property type="project" value="ParkinsonsUK-UCL"/>
</dbReference>
<dbReference type="GO" id="GO:0034392">
    <property type="term" value="P:negative regulation of smooth muscle cell apoptotic process"/>
    <property type="evidence" value="ECO:0000250"/>
    <property type="project" value="UniProtKB"/>
</dbReference>
<dbReference type="GO" id="GO:0030512">
    <property type="term" value="P:negative regulation of transforming growth factor beta receptor signaling pathway"/>
    <property type="evidence" value="ECO:0007669"/>
    <property type="project" value="Ensembl"/>
</dbReference>
<dbReference type="GO" id="GO:1904694">
    <property type="term" value="P:negative regulation of vascular associated smooth muscle contraction"/>
    <property type="evidence" value="ECO:0007669"/>
    <property type="project" value="Ensembl"/>
</dbReference>
<dbReference type="GO" id="GO:0090035">
    <property type="term" value="P:positive regulation of chaperone-mediated protein complex assembly"/>
    <property type="evidence" value="ECO:0007669"/>
    <property type="project" value="Ensembl"/>
</dbReference>
<dbReference type="GO" id="GO:1904294">
    <property type="term" value="P:positive regulation of ERAD pathway"/>
    <property type="evidence" value="ECO:0000250"/>
    <property type="project" value="UniProtKB"/>
</dbReference>
<dbReference type="GO" id="GO:1901526">
    <property type="term" value="P:positive regulation of mitophagy"/>
    <property type="evidence" value="ECO:0000250"/>
    <property type="project" value="UniProtKB"/>
</dbReference>
<dbReference type="GO" id="GO:0032436">
    <property type="term" value="P:positive regulation of proteasomal ubiquitin-dependent protein catabolic process"/>
    <property type="evidence" value="ECO:0000250"/>
    <property type="project" value="HGNC-UCL"/>
</dbReference>
<dbReference type="GO" id="GO:0031398">
    <property type="term" value="P:positive regulation of protein ubiquitination"/>
    <property type="evidence" value="ECO:0000314"/>
    <property type="project" value="ParkinsonsUK-UCL"/>
</dbReference>
<dbReference type="GO" id="GO:0045862">
    <property type="term" value="P:positive regulation of proteolysis"/>
    <property type="evidence" value="ECO:0000250"/>
    <property type="project" value="UniProtKB"/>
</dbReference>
<dbReference type="GO" id="GO:0034393">
    <property type="term" value="P:positive regulation of smooth muscle cell apoptotic process"/>
    <property type="evidence" value="ECO:0000250"/>
    <property type="project" value="UniProtKB"/>
</dbReference>
<dbReference type="GO" id="GO:0051443">
    <property type="term" value="P:positive regulation of ubiquitin-protein transferase activity"/>
    <property type="evidence" value="ECO:0000314"/>
    <property type="project" value="ParkinsonsUK-UCL"/>
</dbReference>
<dbReference type="GO" id="GO:0043161">
    <property type="term" value="P:proteasome-mediated ubiquitin-dependent protein catabolic process"/>
    <property type="evidence" value="ECO:0000314"/>
    <property type="project" value="UniProtKB"/>
</dbReference>
<dbReference type="GO" id="GO:0051865">
    <property type="term" value="P:protein autoubiquitination"/>
    <property type="evidence" value="ECO:0000250"/>
    <property type="project" value="UniProtKB"/>
</dbReference>
<dbReference type="GO" id="GO:0006457">
    <property type="term" value="P:protein folding"/>
    <property type="evidence" value="ECO:0000304"/>
    <property type="project" value="HGNC-UCL"/>
</dbReference>
<dbReference type="GO" id="GO:0070534">
    <property type="term" value="P:protein K63-linked ubiquitination"/>
    <property type="evidence" value="ECO:0000250"/>
    <property type="project" value="UniProtKB"/>
</dbReference>
<dbReference type="GO" id="GO:0006513">
    <property type="term" value="P:protein monoubiquitination"/>
    <property type="evidence" value="ECO:0007669"/>
    <property type="project" value="Ensembl"/>
</dbReference>
<dbReference type="GO" id="GO:0000209">
    <property type="term" value="P:protein polyubiquitination"/>
    <property type="evidence" value="ECO:0000314"/>
    <property type="project" value="MGI"/>
</dbReference>
<dbReference type="GO" id="GO:0006515">
    <property type="term" value="P:protein quality control for misfolded or incompletely synthesized proteins"/>
    <property type="evidence" value="ECO:0000315"/>
    <property type="project" value="UniProtKB"/>
</dbReference>
<dbReference type="GO" id="GO:0050821">
    <property type="term" value="P:protein stabilization"/>
    <property type="evidence" value="ECO:0007669"/>
    <property type="project" value="Ensembl"/>
</dbReference>
<dbReference type="GO" id="GO:0016567">
    <property type="term" value="P:protein ubiquitination"/>
    <property type="evidence" value="ECO:0000314"/>
    <property type="project" value="MGI"/>
</dbReference>
<dbReference type="GO" id="GO:0031943">
    <property type="term" value="P:regulation of glucocorticoid metabolic process"/>
    <property type="evidence" value="ECO:0000250"/>
    <property type="project" value="HGNC-UCL"/>
</dbReference>
<dbReference type="GO" id="GO:0002931">
    <property type="term" value="P:response to ischemia"/>
    <property type="evidence" value="ECO:0007669"/>
    <property type="project" value="Ensembl"/>
</dbReference>
<dbReference type="GO" id="GO:0006511">
    <property type="term" value="P:ubiquitin-dependent protein catabolic process"/>
    <property type="evidence" value="ECO:0000314"/>
    <property type="project" value="MGI"/>
</dbReference>
<dbReference type="CDD" id="cd16654">
    <property type="entry name" value="RING-Ubox_CHIP"/>
    <property type="match status" value="1"/>
</dbReference>
<dbReference type="FunFam" id="1.25.40.10:FF:000198">
    <property type="entry name" value="E3 ubiquitin-protein ligase CHIP isoform X2"/>
    <property type="match status" value="1"/>
</dbReference>
<dbReference type="FunFam" id="3.30.40.10:FF:000124">
    <property type="entry name" value="STIP1 homology and U box-containing protein 1"/>
    <property type="match status" value="1"/>
</dbReference>
<dbReference type="Gene3D" id="6.10.140.2020">
    <property type="match status" value="1"/>
</dbReference>
<dbReference type="Gene3D" id="1.25.40.10">
    <property type="entry name" value="Tetratricopeptide repeat domain"/>
    <property type="match status" value="1"/>
</dbReference>
<dbReference type="Gene3D" id="3.30.40.10">
    <property type="entry name" value="Zinc/RING finger domain, C3HC4 (zinc finger)"/>
    <property type="match status" value="1"/>
</dbReference>
<dbReference type="InterPro" id="IPR045202">
    <property type="entry name" value="CHIP_RING-Ubox"/>
</dbReference>
<dbReference type="InterPro" id="IPR041312">
    <property type="entry name" value="CHIP_TPR_N"/>
</dbReference>
<dbReference type="InterPro" id="IPR011990">
    <property type="entry name" value="TPR-like_helical_dom_sf"/>
</dbReference>
<dbReference type="InterPro" id="IPR019734">
    <property type="entry name" value="TPR_rpt"/>
</dbReference>
<dbReference type="InterPro" id="IPR003613">
    <property type="entry name" value="Ubox_domain"/>
</dbReference>
<dbReference type="InterPro" id="IPR013083">
    <property type="entry name" value="Znf_RING/FYVE/PHD"/>
</dbReference>
<dbReference type="PANTHER" id="PTHR46803">
    <property type="entry name" value="E3 UBIQUITIN-PROTEIN LIGASE CHIP"/>
    <property type="match status" value="1"/>
</dbReference>
<dbReference type="PANTHER" id="PTHR46803:SF2">
    <property type="entry name" value="E3 UBIQUITIN-PROTEIN LIGASE CHIP"/>
    <property type="match status" value="1"/>
</dbReference>
<dbReference type="Pfam" id="PF12895">
    <property type="entry name" value="ANAPC3"/>
    <property type="match status" value="1"/>
</dbReference>
<dbReference type="Pfam" id="PF18391">
    <property type="entry name" value="CHIP_TPR_N"/>
    <property type="match status" value="1"/>
</dbReference>
<dbReference type="Pfam" id="PF04564">
    <property type="entry name" value="U-box"/>
    <property type="match status" value="1"/>
</dbReference>
<dbReference type="SMART" id="SM00028">
    <property type="entry name" value="TPR"/>
    <property type="match status" value="3"/>
</dbReference>
<dbReference type="SMART" id="SM00504">
    <property type="entry name" value="Ubox"/>
    <property type="match status" value="1"/>
</dbReference>
<dbReference type="SUPFAM" id="SSF57850">
    <property type="entry name" value="RING/U-box"/>
    <property type="match status" value="1"/>
</dbReference>
<dbReference type="SUPFAM" id="SSF48452">
    <property type="entry name" value="TPR-like"/>
    <property type="match status" value="1"/>
</dbReference>
<dbReference type="PROSITE" id="PS50005">
    <property type="entry name" value="TPR"/>
    <property type="match status" value="3"/>
</dbReference>
<dbReference type="PROSITE" id="PS50293">
    <property type="entry name" value="TPR_REGION"/>
    <property type="match status" value="1"/>
</dbReference>
<dbReference type="PROSITE" id="PS51698">
    <property type="entry name" value="U_BOX"/>
    <property type="match status" value="1"/>
</dbReference>
<organism>
    <name type="scientific">Mus musculus</name>
    <name type="common">Mouse</name>
    <dbReference type="NCBI Taxonomy" id="10090"/>
    <lineage>
        <taxon>Eukaryota</taxon>
        <taxon>Metazoa</taxon>
        <taxon>Chordata</taxon>
        <taxon>Craniata</taxon>
        <taxon>Vertebrata</taxon>
        <taxon>Euteleostomi</taxon>
        <taxon>Mammalia</taxon>
        <taxon>Eutheria</taxon>
        <taxon>Euarchontoglires</taxon>
        <taxon>Glires</taxon>
        <taxon>Rodentia</taxon>
        <taxon>Myomorpha</taxon>
        <taxon>Muroidea</taxon>
        <taxon>Muridae</taxon>
        <taxon>Murinae</taxon>
        <taxon>Mus</taxon>
        <taxon>Mus</taxon>
    </lineage>
</organism>
<proteinExistence type="evidence at protein level"/>
<keyword id="KW-0002">3D-structure</keyword>
<keyword id="KW-0963">Cytoplasm</keyword>
<keyword id="KW-0227">DNA damage</keyword>
<keyword id="KW-0234">DNA repair</keyword>
<keyword id="KW-1017">Isopeptide bond</keyword>
<keyword id="KW-0496">Mitochondrion</keyword>
<keyword id="KW-0539">Nucleus</keyword>
<keyword id="KW-0597">Phosphoprotein</keyword>
<keyword id="KW-1185">Reference proteome</keyword>
<keyword id="KW-0677">Repeat</keyword>
<keyword id="KW-0802">TPR repeat</keyword>
<keyword id="KW-0808">Transferase</keyword>
<keyword id="KW-0832">Ubl conjugation</keyword>
<keyword id="KW-0833">Ubl conjugation pathway</keyword>
<feature type="chain" id="PRO_0000106330" description="E3 ubiquitin-protein ligase CHIP">
    <location>
        <begin position="1"/>
        <end position="304"/>
    </location>
</feature>
<feature type="repeat" description="TPR 1">
    <location>
        <begin position="27"/>
        <end position="60"/>
    </location>
</feature>
<feature type="repeat" description="TPR 2">
    <location>
        <begin position="61"/>
        <end position="94"/>
    </location>
</feature>
<feature type="repeat" description="TPR 3">
    <location>
        <begin position="96"/>
        <end position="128"/>
    </location>
</feature>
<feature type="domain" description="U-box">
    <location>
        <begin position="227"/>
        <end position="301"/>
    </location>
</feature>
<feature type="region of interest" description="Disordered" evidence="3">
    <location>
        <begin position="1"/>
        <end position="30"/>
    </location>
</feature>
<feature type="region of interest" description="Required for interaction with MAPK7" evidence="2">
    <location>
        <begin position="102"/>
        <end position="201"/>
    </location>
</feature>
<feature type="region of interest" description="Required for interaction with and ubiquitination of MYOCD" evidence="1">
    <location>
        <begin position="143"/>
        <end position="197"/>
    </location>
</feature>
<feature type="region of interest" description="Required for ubiquitination of FOXO1" evidence="2">
    <location>
        <begin position="144"/>
        <end position="304"/>
    </location>
</feature>
<feature type="region of interest" description="Required for interaction with FOXO1" evidence="2">
    <location>
        <begin position="144"/>
        <end position="198"/>
    </location>
</feature>
<feature type="compositionally biased region" description="Basic and acidic residues" evidence="3">
    <location>
        <begin position="1"/>
        <end position="10"/>
    </location>
</feature>
<feature type="compositionally biased region" description="Gly residues" evidence="3">
    <location>
        <begin position="11"/>
        <end position="20"/>
    </location>
</feature>
<feature type="modified residue" description="Phosphoserine" evidence="18 20 21">
    <location>
        <position position="20"/>
    </location>
</feature>
<feature type="modified residue" description="Phosphoserine" evidence="19 21">
    <location>
        <position position="24"/>
    </location>
</feature>
<feature type="modified residue" description="Phosphoserine" evidence="19">
    <location>
        <position position="26"/>
    </location>
</feature>
<feature type="modified residue" description="Phosphoserine" evidence="2">
    <location>
        <position position="150"/>
    </location>
</feature>
<feature type="modified residue" description="Phosphoserine" evidence="2">
    <location>
        <position position="274"/>
    </location>
</feature>
<feature type="cross-link" description="Glycyl lysine isopeptide (Lys-Gly) (interchain with G-Cter in ubiquitin)" evidence="9">
    <location>
        <position position="2"/>
    </location>
</feature>
<feature type="cross-link" description="Glycyl lysine isopeptide (Lys-Gly) (interchain with G-Cter in ubiquitin)" evidence="2">
    <location>
        <position position="23"/>
    </location>
</feature>
<feature type="cross-link" description="Glycyl lysine isopeptide (Lys-Gly) (interchain with G-Cter in ubiquitin)" evidence="2">
    <location>
        <position position="222"/>
    </location>
</feature>
<feature type="cross-link" description="Glycyl lysine isopeptide (Lys-Gly) (interchain with G-Cter in ubiquitin)" evidence="2">
    <location>
        <position position="256"/>
    </location>
</feature>
<feature type="mutagenesis site" description="Impaired interaction with ATXN3; when associated with R-4 and R-7." evidence="9">
    <original>K</original>
    <variation>R</variation>
    <location>
        <position position="2"/>
    </location>
</feature>
<feature type="mutagenesis site" description="Impaired interaction with ATXN3; when associated with R-2 and R-7." evidence="9">
    <original>K</original>
    <variation>R</variation>
    <location>
        <position position="4"/>
    </location>
</feature>
<feature type="mutagenesis site" description="Impaired interaction with ATXN3; when associated with R-2 and R-4." evidence="9">
    <original>K</original>
    <variation>R</variation>
    <location>
        <position position="7"/>
    </location>
</feature>
<feature type="mutagenesis site" description="Loss of E3 ubiquitin protein ligase activity." evidence="4">
    <original>H</original>
    <variation>A</variation>
    <location>
        <position position="261"/>
    </location>
</feature>
<feature type="mutagenesis site" description="Loss of E3 ubiquitin protein ligase activity." evidence="4">
    <original>P</original>
    <variation>A</variation>
    <location>
        <position position="270"/>
    </location>
</feature>
<feature type="sequence conflict" description="In Ref. 2; BAB22329." evidence="16" ref="2">
    <original>S</original>
    <variation>T</variation>
    <location>
        <position position="20"/>
    </location>
</feature>
<feature type="helix" evidence="24">
    <location>
        <begin position="27"/>
        <end position="39"/>
    </location>
</feature>
<feature type="helix" evidence="24">
    <location>
        <begin position="43"/>
        <end position="56"/>
    </location>
</feature>
<feature type="helix" evidence="24">
    <location>
        <begin position="61"/>
        <end position="73"/>
    </location>
</feature>
<feature type="helix" evidence="24">
    <location>
        <begin position="77"/>
        <end position="90"/>
    </location>
</feature>
<feature type="helix" evidence="24">
    <location>
        <begin position="95"/>
        <end position="107"/>
    </location>
</feature>
<feature type="helix" evidence="24">
    <location>
        <begin position="111"/>
        <end position="127"/>
    </location>
</feature>
<feature type="helix" evidence="24">
    <location>
        <begin position="135"/>
        <end position="152"/>
    </location>
</feature>
<feature type="helix" evidence="22">
    <location>
        <begin position="161"/>
        <end position="178"/>
    </location>
</feature>
<feature type="turn" evidence="22">
    <location>
        <begin position="179"/>
        <end position="181"/>
    </location>
</feature>
<feature type="helix" evidence="22">
    <location>
        <begin position="183"/>
        <end position="185"/>
    </location>
</feature>
<feature type="turn" evidence="22">
    <location>
        <begin position="186"/>
        <end position="188"/>
    </location>
</feature>
<feature type="helix" evidence="22">
    <location>
        <begin position="191"/>
        <end position="194"/>
    </location>
</feature>
<feature type="helix" evidence="22">
    <location>
        <begin position="196"/>
        <end position="218"/>
    </location>
</feature>
<feature type="helix" evidence="23">
    <location>
        <begin position="230"/>
        <end position="232"/>
    </location>
</feature>
<feature type="turn" evidence="23">
    <location>
        <begin position="235"/>
        <end position="237"/>
    </location>
</feature>
<feature type="strand" evidence="23">
    <location>
        <begin position="242"/>
        <end position="246"/>
    </location>
</feature>
<feature type="strand" evidence="23">
    <location>
        <begin position="252"/>
        <end position="254"/>
    </location>
</feature>
<feature type="helix" evidence="23">
    <location>
        <begin position="255"/>
        <end position="264"/>
    </location>
</feature>
<feature type="turn" evidence="23">
    <location>
        <begin position="270"/>
        <end position="272"/>
    </location>
</feature>
<feature type="helix" evidence="23">
    <location>
        <begin position="278"/>
        <end position="280"/>
    </location>
</feature>
<feature type="helix" evidence="23">
    <location>
        <begin position="285"/>
        <end position="298"/>
    </location>
</feature>
<protein>
    <recommendedName>
        <fullName evidence="16">E3 ubiquitin-protein ligase CHIP</fullName>
        <ecNumber evidence="4 9">2.3.2.27</ecNumber>
    </recommendedName>
    <alternativeName>
        <fullName evidence="14">Carboxy terminus of Hsp70-interacting protein</fullName>
    </alternativeName>
    <alternativeName>
        <fullName evidence="16">RING-type E3 ubiquitin transferase CHIP</fullName>
    </alternativeName>
    <alternativeName>
        <fullName evidence="16">STIP1 homology and U box-containing protein 1</fullName>
    </alternativeName>
</protein>
<name>CHIP_MOUSE</name>
<evidence type="ECO:0000250" key="1">
    <source>
        <dbReference type="UniProtKB" id="A6HD62"/>
    </source>
</evidence>
<evidence type="ECO:0000250" key="2">
    <source>
        <dbReference type="UniProtKB" id="Q9UNE7"/>
    </source>
</evidence>
<evidence type="ECO:0000256" key="3">
    <source>
        <dbReference type="SAM" id="MobiDB-lite"/>
    </source>
</evidence>
<evidence type="ECO:0000269" key="4">
    <source>
    </source>
</evidence>
<evidence type="ECO:0000269" key="5">
    <source>
    </source>
</evidence>
<evidence type="ECO:0000269" key="6">
    <source>
    </source>
</evidence>
<evidence type="ECO:0000269" key="7">
    <source>
    </source>
</evidence>
<evidence type="ECO:0000269" key="8">
    <source>
    </source>
</evidence>
<evidence type="ECO:0000269" key="9">
    <source>
    </source>
</evidence>
<evidence type="ECO:0000269" key="10">
    <source>
    </source>
</evidence>
<evidence type="ECO:0000269" key="11">
    <source>
    </source>
</evidence>
<evidence type="ECO:0000269" key="12">
    <source>
    </source>
</evidence>
<evidence type="ECO:0000269" key="13">
    <source>
    </source>
</evidence>
<evidence type="ECO:0000303" key="14">
    <source>
    </source>
</evidence>
<evidence type="ECO:0000303" key="15">
    <source>
    </source>
</evidence>
<evidence type="ECO:0000305" key="16"/>
<evidence type="ECO:0000312" key="17">
    <source>
        <dbReference type="MGI" id="MGI:1891731"/>
    </source>
</evidence>
<evidence type="ECO:0007744" key="18">
    <source>
    </source>
</evidence>
<evidence type="ECO:0007744" key="19">
    <source>
    </source>
</evidence>
<evidence type="ECO:0007744" key="20">
    <source>
    </source>
</evidence>
<evidence type="ECO:0007744" key="21">
    <source>
    </source>
</evidence>
<evidence type="ECO:0007829" key="22">
    <source>
        <dbReference type="PDB" id="2C2L"/>
    </source>
</evidence>
<evidence type="ECO:0007829" key="23">
    <source>
        <dbReference type="PDB" id="2C2V"/>
    </source>
</evidence>
<evidence type="ECO:0007829" key="24">
    <source>
        <dbReference type="PDB" id="3Q4A"/>
    </source>
</evidence>
<accession>Q9WUD1</accession>
<accession>Q9DCJ0</accession>
<comment type="function">
    <text evidence="1 2 4 9 11 12 13">E3 ubiquitin-protein ligase which targets misfolded chaperone substrates towards proteasomal degradation (PubMed:11435423, PubMed:21855799, PubMed:26265139). Plays a role in the maintenance of mitochondrial morphology and promotes mitophagic removal of dysfunctional mitochondria; thereby acts as a protector against apoptosis in response to cellular stress (PubMed:29934347). Negatively regulates vascular smooth muscle contraction, via degradation of the transcriptional activator MYOCD and subsequent loss of transcription of genes involved in vascular smooth muscle contraction (By similarity). Promotes survival and proliferation of cardiac smooth muscle cells via ubiquitination and degradation of FOXO1, resulting in subsequent repression of FOXO1-mediated transcription of pro-apoptotic genes (By similarity). Ubiquitinates ICER-type isoforms of CREM and targets them for proteasomal degradation, thereby acts as a positive effector of MAPK/ERK-mediated inhibition of apoptosis in cardiomyocytes (By similarity). Inhibits lipopolysaccharide-induced apoptosis and hypertrophy in cardiomyocytes, via ubiquitination and subsequent proteasomal degradation of NFATC3 (By similarity). Collaborates with ATXN3 in the degradation of misfolded chaperone substrates: ATXN3 restricting the length of ubiquitin chain attached to STUB1/CHIP substrates and preventing further chain extension (PubMed:11435423, PubMed:21855799). Ubiquitinates NOS1 in concert with Hsp70 and Hsp40 (By similarity). Modulates the activity of several chaperone complexes, including Hsp70, Hsc70 and Hsp90 (By similarity). Ubiquitinates CHRNA3 targeting it for endoplasmic reticulum-associated degradation in cortical neurons, as part of the STUB1-VCP-UBXN2A complex (By similarity). Ubiquitinates and promotes ESR1 proteasomal degradation in response to age-related circulating estradiol (17-beta-estradiol/E2) decline, thereby promotes neuronal apoptosis in response to ischemic reperfusion injury (By similarity). Mediates transfer of non-canonical short ubiquitin chains to HSPA8 that have no effect on HSPA8 degradation (By similarity). Mediates polyubiquitination of DNA polymerase beta (POLB) at 'Lys-41', 'Lys-61' and 'Lys-81', thereby playing a role in base-excision repair: catalyzes polyubiquitination by amplifying the HUWE1/ARF-BP1-dependent monoubiquitination and leading to POLB-degradation by the proteasome (By similarity). Mediates polyubiquitination of CYP3A4 (By similarity). Ubiquitinates EPHA2 and may regulate the receptor stability and activity through proteasomal degradation (By similarity). Acts as a co-chaperone for HSPA1A and HSPA1B chaperone proteins and promotes ubiquitin-mediated protein degradation. Negatively regulates the suppressive function of regulatory T-cells (Treg) during inflammation by mediating the ubiquitination and degradation of FOXP3 in a HSPA1A/B-dependent manner (PubMed:23973223). Catalyzes monoubiquitination of SIRT6, preventing its degradation by the proteasome (PubMed:24043303). Likely mediates polyubiquitination and down-regulates plasma membrane expression of PD-L1/CD274, an immune inhibitory ligand critical for immune tolerance to self and antitumor immunity (By similarity). Negatively regulates TGF-beta signaling by modulating the basal level of SMAD3 via ubiquitin-mediated degradation (By similarity). Plays a role in the degradation of TP53 (By similarity). Mediates ubiquitination of RIPK3 leading to its subsequent proteasome-dependent degradation (By similarity). May regulate myosin assembly in striated muscles together with UBE4B and VCP/p97 by targeting myosin chaperone UNC45B for proteasomal degradation (By similarity). Ubiquitinates PPARG in macrophages playing a role in M2 macrophages polarization and angiogenesis (PubMed:35710596).</text>
</comment>
<comment type="catalytic activity">
    <reaction evidence="4 9">
        <text>S-ubiquitinyl-[E2 ubiquitin-conjugating enzyme]-L-cysteine + [acceptor protein]-L-lysine = [E2 ubiquitin-conjugating enzyme]-L-cysteine + N(6)-ubiquitinyl-[acceptor protein]-L-lysine.</text>
        <dbReference type="EC" id="2.3.2.27"/>
    </reaction>
</comment>
<comment type="pathway">
    <text evidence="4 9">Protein modification; protein ubiquitination.</text>
</comment>
<comment type="subunit">
    <text evidence="1 2 5 6 7 8 9 13">Homodimer (PubMed:16307917). Interacts with BAG2, and with the E2 ubiquitin conjugating enzymes UBE2D1, UBE2D2 and UBE2D3. Detected in a ternary complex containing STUB1, HSPA1A and HSPBP1. Part of a complex composed of STUB1/CHIP, VCP/p97, CHRNA3, and UBXN2A that modulates the ubiquitination and endoplasmic reticulum-associated degradation (ERAD) of CHRNA3 (By similarity). Within the complex UBXN2A acts as a scaffold protein required for the interaction of CHRNA3 with VCP/p97, this interaction also inhibits CHRNA3 ubiquitination by STUB1/CHIP and subsequently ERAD (By similarity). Interacts with MKKS. Interacts with DNAAF4 (By similarity). Interacts (via the U-box domain) with the UBE2V2-UBE2N heterodimer; the complex has a specific 'Lys-63'-linked polyubiquitination activity (PubMed:16307917). Interacts (when monoubiquitinated) with ATXN3 (PubMed:21855799). Interacts with UBE2W (PubMed:21855799). Interacts with DNAJB6 (By similarity). Interacts with FLCN and HSP90AA1. Interacts with HSP90. Interacts with UBE2N and UBE2V1. Interacts (via TPR repeats) with HSPA8 (via C-terminus) (By similarity). Interacts (via TPR repeats) with HSPA1A (via C-terminus) (By similarity). Interacts with the non-acetylated form of HSPA1A and HSPA1B. Interacts with SMAD3 and HSP90AB1 (By similarity). Interacts with UBE4B (By similarity). Interacts with PRMT5 (By similarity). Interacts with MYOCD (via C-terminus) (PubMed:19237536). Interacts with FOXO1 (when phosphorylated on 'Ser-253') (By similarity). Interacts with MAPK7/ERK5; the interaction is enhanced in the presence of IGF1 or MAP2K5 and promotes STUB1/CHIP E3 ligase activity (PubMed:20724525). Interacts with and ubiquitinates ESR1; the interaction is promoted in the absence of estradiol (17-beta-estradiol/E2) (By similarity). Interacts with ESR2 (By similarity). Interacts with and ubiquitinates NFATC3; HSPA1A/HSP70 is required as a co-chaperone (By similarity). In macrophages, interacts with PAQR3; the interaction promotes PPARG poylubiquitination and STUB1-mediated degradation (PubMed:35710596). Component of the chaperone-assisted selective autophagy (CASA) complex consisting of BAG3, HSPA8/HSC70, HSPB8 and STUB1/CHIP (PubMed:20060297).</text>
</comment>
<comment type="interaction">
    <interactant intactId="EBI-773027">
        <id>Q9WUD1</id>
    </interactant>
    <interactant intactId="EBI-6690138">
        <id>O55222</id>
        <label>Ilk</label>
    </interactant>
    <organismsDiffer>false</organismsDiffer>
    <experiments>7</experiments>
</comment>
<comment type="interaction">
    <interactant intactId="EBI-773027">
        <id>Q9WUD1</id>
    </interactant>
    <interactant intactId="EBI-5323863">
        <id>Q5S007</id>
        <label>LRRK2</label>
    </interactant>
    <organismsDiffer>true</organismsDiffer>
    <experiments>2</experiments>
</comment>
<comment type="interaction">
    <interactant intactId="EBI-773027">
        <id>Q9WUD1</id>
    </interactant>
    <interactant intactId="EBI-1052908">
        <id>P61088</id>
        <label>UBE2N</label>
    </interactant>
    <organismsDiffer>true</organismsDiffer>
    <experiments>2</experiments>
</comment>
<comment type="subcellular location">
    <subcellularLocation>
        <location evidence="4">Cytoplasm</location>
    </subcellularLocation>
    <subcellularLocation>
        <location evidence="2">Nucleus</location>
    </subcellularLocation>
    <subcellularLocation>
        <location evidence="1">Mitochondrion</location>
    </subcellularLocation>
    <text evidence="1 2">Translocates to the nucleus in response to inflammatory signals in regulatory T-cells (Treg). Localizes to mitochondria following oxygen and glucose deprivation-induced cellular stress (By similarity).</text>
</comment>
<comment type="tissue specificity">
    <text evidence="11">Expressed in the brain.</text>
</comment>
<comment type="induction">
    <text evidence="10">Up-regulated by inflammatory signals in Treg regulatory T-cells (Treg).</text>
</comment>
<comment type="domain">
    <text evidence="4">The U-box domain is required for the ubiquitin protein ligase activity.</text>
</comment>
<comment type="domain">
    <text evidence="2">The TPR domain is essential for ubiquitination mediated by UBE2D1.</text>
</comment>
<comment type="PTM">
    <text evidence="9">Auto-ubiquitinated; mediated by UBE2D1 and UBE2D2 and enhanced in the presence of MAP2K5. Monoubiquitinated at Lys-2 following cell stress by UBE2W, promoting the interaction with ATXN3.</text>
</comment>
<comment type="disruption phenotype">
    <text evidence="8 11 12">95% of knockout mice die at birth, surviving mice have decreased longevity (PubMed:20724525, PubMed:29934347). Reduced levels of CHRNA3 ubiquitination in the brain (PubMed:26265139).</text>
</comment>
<sequence length="304" mass="34909">MKGKEEKEGGARLGTGGGGSPDKSPSAQELKEQGNRLFVGRKYPEAAACYGRAITRNPLVAVYYTNRALCYLKMQQPEQALADCRRALELDGQSVKAHFFLGQCQLEMESYDEAIANLQRAYSLAKEQRLNFGDDIPSALRIAKKKRWNSIEERRIHQESELHSYLTRLIAAERERELEECQRNHEGHEDDGHIRAQQACIEAKHDKYMADMDELFSQVDEKRKKRDIPDYLCGKISFELMREPCITPSGITYDRKDIEEHLQRVGHFDPVTRSPLTQEQLIPNLAMKEVIDAFISENGWVEDY</sequence>
<gene>
    <name evidence="15 17" type="primary">Stub1</name>
    <name evidence="14" type="synonym">Chip</name>
</gene>